<comment type="function">
    <text evidence="1">Converts 2C-methyl-D-erythritol 2,4-cyclodiphosphate (ME-2,4cPP) into 1-hydroxy-2-methyl-2-(E)-butenyl 4-diphosphate.</text>
</comment>
<comment type="catalytic activity">
    <reaction evidence="1">
        <text>(2E)-4-hydroxy-3-methylbut-2-enyl diphosphate + oxidized [flavodoxin] + H2O + 2 H(+) = 2-C-methyl-D-erythritol 2,4-cyclic diphosphate + reduced [flavodoxin]</text>
        <dbReference type="Rhea" id="RHEA:43604"/>
        <dbReference type="Rhea" id="RHEA-COMP:10622"/>
        <dbReference type="Rhea" id="RHEA-COMP:10623"/>
        <dbReference type="ChEBI" id="CHEBI:15377"/>
        <dbReference type="ChEBI" id="CHEBI:15378"/>
        <dbReference type="ChEBI" id="CHEBI:57618"/>
        <dbReference type="ChEBI" id="CHEBI:58210"/>
        <dbReference type="ChEBI" id="CHEBI:58483"/>
        <dbReference type="ChEBI" id="CHEBI:128753"/>
        <dbReference type="EC" id="1.17.7.3"/>
    </reaction>
</comment>
<comment type="cofactor">
    <cofactor evidence="1">
        <name>[4Fe-4S] cluster</name>
        <dbReference type="ChEBI" id="CHEBI:49883"/>
    </cofactor>
    <text evidence="1">Binds 1 [4Fe-4S] cluster.</text>
</comment>
<comment type="pathway">
    <text evidence="1">Isoprenoid biosynthesis; isopentenyl diphosphate biosynthesis via DXP pathway; isopentenyl diphosphate from 1-deoxy-D-xylulose 5-phosphate: step 5/6.</text>
</comment>
<comment type="similarity">
    <text evidence="1">Belongs to the IspG family.</text>
</comment>
<feature type="chain" id="PRO_1000011499" description="4-hydroxy-3-methylbut-2-en-1-yl diphosphate synthase (flavodoxin)">
    <location>
        <begin position="1"/>
        <end position="369"/>
    </location>
</feature>
<feature type="binding site" evidence="1">
    <location>
        <position position="270"/>
    </location>
    <ligand>
        <name>[4Fe-4S] cluster</name>
        <dbReference type="ChEBI" id="CHEBI:49883"/>
    </ligand>
</feature>
<feature type="binding site" evidence="1">
    <location>
        <position position="273"/>
    </location>
    <ligand>
        <name>[4Fe-4S] cluster</name>
        <dbReference type="ChEBI" id="CHEBI:49883"/>
    </ligand>
</feature>
<feature type="binding site" evidence="1">
    <location>
        <position position="305"/>
    </location>
    <ligand>
        <name>[4Fe-4S] cluster</name>
        <dbReference type="ChEBI" id="CHEBI:49883"/>
    </ligand>
</feature>
<feature type="binding site" evidence="1">
    <location>
        <position position="312"/>
    </location>
    <ligand>
        <name>[4Fe-4S] cluster</name>
        <dbReference type="ChEBI" id="CHEBI:49883"/>
    </ligand>
</feature>
<dbReference type="EC" id="1.17.7.3" evidence="1"/>
<dbReference type="EMBL" id="CP000076">
    <property type="protein sequence ID" value="AAY94183.1"/>
    <property type="molecule type" value="Genomic_DNA"/>
</dbReference>
<dbReference type="RefSeq" id="WP_011063207.1">
    <property type="nucleotide sequence ID" value="NC_004129.6"/>
</dbReference>
<dbReference type="SMR" id="Q4K6U9"/>
<dbReference type="STRING" id="220664.PFL_4954"/>
<dbReference type="GeneID" id="57477936"/>
<dbReference type="KEGG" id="pfl:PFL_4954"/>
<dbReference type="PATRIC" id="fig|220664.5.peg.5075"/>
<dbReference type="eggNOG" id="COG0821">
    <property type="taxonomic scope" value="Bacteria"/>
</dbReference>
<dbReference type="HOGENOM" id="CLU_042258_0_0_6"/>
<dbReference type="UniPathway" id="UPA00056">
    <property type="reaction ID" value="UER00096"/>
</dbReference>
<dbReference type="Proteomes" id="UP000008540">
    <property type="component" value="Chromosome"/>
</dbReference>
<dbReference type="GO" id="GO:0051539">
    <property type="term" value="F:4 iron, 4 sulfur cluster binding"/>
    <property type="evidence" value="ECO:0007669"/>
    <property type="project" value="UniProtKB-UniRule"/>
</dbReference>
<dbReference type="GO" id="GO:0046429">
    <property type="term" value="F:4-hydroxy-3-methylbut-2-en-1-yl diphosphate synthase activity (ferredoxin)"/>
    <property type="evidence" value="ECO:0007669"/>
    <property type="project" value="UniProtKB-UniRule"/>
</dbReference>
<dbReference type="GO" id="GO:0141197">
    <property type="term" value="F:4-hydroxy-3-methylbut-2-enyl-diphosphate synthase activity (flavodoxin)"/>
    <property type="evidence" value="ECO:0007669"/>
    <property type="project" value="UniProtKB-EC"/>
</dbReference>
<dbReference type="GO" id="GO:0005506">
    <property type="term" value="F:iron ion binding"/>
    <property type="evidence" value="ECO:0007669"/>
    <property type="project" value="InterPro"/>
</dbReference>
<dbReference type="GO" id="GO:0019288">
    <property type="term" value="P:isopentenyl diphosphate biosynthetic process, methylerythritol 4-phosphate pathway"/>
    <property type="evidence" value="ECO:0007669"/>
    <property type="project" value="UniProtKB-UniRule"/>
</dbReference>
<dbReference type="GO" id="GO:0016114">
    <property type="term" value="P:terpenoid biosynthetic process"/>
    <property type="evidence" value="ECO:0007669"/>
    <property type="project" value="InterPro"/>
</dbReference>
<dbReference type="FunFam" id="3.20.20.20:FF:000001">
    <property type="entry name" value="4-hydroxy-3-methylbut-2-en-1-yl diphosphate synthase (flavodoxin)"/>
    <property type="match status" value="1"/>
</dbReference>
<dbReference type="Gene3D" id="3.20.20.20">
    <property type="entry name" value="Dihydropteroate synthase-like"/>
    <property type="match status" value="1"/>
</dbReference>
<dbReference type="Gene3D" id="3.30.413.10">
    <property type="entry name" value="Sulfite Reductase Hemoprotein, domain 1"/>
    <property type="match status" value="1"/>
</dbReference>
<dbReference type="HAMAP" id="MF_00159">
    <property type="entry name" value="IspG"/>
    <property type="match status" value="1"/>
</dbReference>
<dbReference type="InterPro" id="IPR011005">
    <property type="entry name" value="Dihydropteroate_synth-like_sf"/>
</dbReference>
<dbReference type="InterPro" id="IPR016425">
    <property type="entry name" value="IspG_bac"/>
</dbReference>
<dbReference type="InterPro" id="IPR004588">
    <property type="entry name" value="IspG_bac-typ"/>
</dbReference>
<dbReference type="InterPro" id="IPR045854">
    <property type="entry name" value="NO2/SO3_Rdtase_4Fe4S_sf"/>
</dbReference>
<dbReference type="NCBIfam" id="TIGR00612">
    <property type="entry name" value="ispG_gcpE"/>
    <property type="match status" value="1"/>
</dbReference>
<dbReference type="NCBIfam" id="NF001540">
    <property type="entry name" value="PRK00366.1"/>
    <property type="match status" value="1"/>
</dbReference>
<dbReference type="PANTHER" id="PTHR30454">
    <property type="entry name" value="4-HYDROXY-3-METHYLBUT-2-EN-1-YL DIPHOSPHATE SYNTHASE"/>
    <property type="match status" value="1"/>
</dbReference>
<dbReference type="PANTHER" id="PTHR30454:SF0">
    <property type="entry name" value="4-HYDROXY-3-METHYLBUT-2-EN-1-YL DIPHOSPHATE SYNTHASE (FERREDOXIN), CHLOROPLASTIC"/>
    <property type="match status" value="1"/>
</dbReference>
<dbReference type="Pfam" id="PF04551">
    <property type="entry name" value="GcpE"/>
    <property type="match status" value="1"/>
</dbReference>
<dbReference type="PIRSF" id="PIRSF004640">
    <property type="entry name" value="IspG"/>
    <property type="match status" value="1"/>
</dbReference>
<dbReference type="SUPFAM" id="SSF51412">
    <property type="entry name" value="Inosine monophosphate dehydrogenase (IMPDH)"/>
    <property type="match status" value="1"/>
</dbReference>
<dbReference type="SUPFAM" id="SSF56014">
    <property type="entry name" value="Nitrite and sulphite reductase 4Fe-4S domain-like"/>
    <property type="match status" value="1"/>
</dbReference>
<organism>
    <name type="scientific">Pseudomonas fluorescens (strain ATCC BAA-477 / NRRL B-23932 / Pf-5)</name>
    <dbReference type="NCBI Taxonomy" id="220664"/>
    <lineage>
        <taxon>Bacteria</taxon>
        <taxon>Pseudomonadati</taxon>
        <taxon>Pseudomonadota</taxon>
        <taxon>Gammaproteobacteria</taxon>
        <taxon>Pseudomonadales</taxon>
        <taxon>Pseudomonadaceae</taxon>
        <taxon>Pseudomonas</taxon>
    </lineage>
</organism>
<name>ISPG_PSEF5</name>
<proteinExistence type="inferred from homology"/>
<gene>
    <name evidence="1" type="primary">ispG</name>
    <name type="ordered locus">PFL_4954</name>
</gene>
<reference key="1">
    <citation type="journal article" date="2005" name="Nat. Biotechnol.">
        <title>Complete genome sequence of the plant commensal Pseudomonas fluorescens Pf-5.</title>
        <authorList>
            <person name="Paulsen I.T."/>
            <person name="Press C.M."/>
            <person name="Ravel J."/>
            <person name="Kobayashi D.Y."/>
            <person name="Myers G.S.A."/>
            <person name="Mavrodi D.V."/>
            <person name="DeBoy R.T."/>
            <person name="Seshadri R."/>
            <person name="Ren Q."/>
            <person name="Madupu R."/>
            <person name="Dodson R.J."/>
            <person name="Durkin A.S."/>
            <person name="Brinkac L.M."/>
            <person name="Daugherty S.C."/>
            <person name="Sullivan S.A."/>
            <person name="Rosovitz M.J."/>
            <person name="Gwinn M.L."/>
            <person name="Zhou L."/>
            <person name="Schneider D.J."/>
            <person name="Cartinhour S.W."/>
            <person name="Nelson W.C."/>
            <person name="Weidman J."/>
            <person name="Watkins K."/>
            <person name="Tran K."/>
            <person name="Khouri H."/>
            <person name="Pierson E.A."/>
            <person name="Pierson L.S. III"/>
            <person name="Thomashow L.S."/>
            <person name="Loper J.E."/>
        </authorList>
    </citation>
    <scope>NUCLEOTIDE SEQUENCE [LARGE SCALE GENOMIC DNA]</scope>
    <source>
        <strain>ATCC BAA-477 / NRRL B-23932 / Pf-5</strain>
    </source>
</reference>
<keyword id="KW-0004">4Fe-4S</keyword>
<keyword id="KW-0408">Iron</keyword>
<keyword id="KW-0411">Iron-sulfur</keyword>
<keyword id="KW-0414">Isoprene biosynthesis</keyword>
<keyword id="KW-0479">Metal-binding</keyword>
<keyword id="KW-0560">Oxidoreductase</keyword>
<sequence>MHGESPIKRRESRKIWVGSVPVGGDAPIAVQSMTNSDTNDVAATVAQINRLEAAGVDIVRVSVPDMDAAEAFGRIKQQVKVPLVADIHFDYKIALRVAELGVDCLRINPGNIGREDRVRAVVDAARDRGIPIRIGVNAGSLEKDLQKKYGEPTPAALVESALRHVEHLERLNFKDFKVSVKASDVFMAVEAYRLLAKEIIQPLHLGITEAGGLRSGTVKSAVGLGMLLAEGIGDTIRISLAADPVEEVKVGYDILKSLHLRSRGINFIACPSCSRQNFDVVKTMNELEGRLEDLLVPLDVAVIGCVVNGPGEAKEAHIGLTGGTPNLIYIDGKPAQKLTNDNLVDELEKLIRQKAAEKVEADAALIARG</sequence>
<evidence type="ECO:0000255" key="1">
    <source>
        <dbReference type="HAMAP-Rule" id="MF_00159"/>
    </source>
</evidence>
<accession>Q4K6U9</accession>
<protein>
    <recommendedName>
        <fullName evidence="1">4-hydroxy-3-methylbut-2-en-1-yl diphosphate synthase (flavodoxin)</fullName>
        <ecNumber evidence="1">1.17.7.3</ecNumber>
    </recommendedName>
    <alternativeName>
        <fullName evidence="1">1-hydroxy-2-methyl-2-(E)-butenyl 4-diphosphate synthase</fullName>
    </alternativeName>
</protein>